<name>ARI5B_BOVIN</name>
<feature type="chain" id="PRO_0000410899" description="AT-rich interactive domain-containing protein 5B">
    <location>
        <begin position="1"/>
        <end position="1173"/>
    </location>
</feature>
<feature type="domain" description="ARID" evidence="3">
    <location>
        <begin position="322"/>
        <end position="414"/>
    </location>
</feature>
<feature type="region of interest" description="Disordered" evidence="4">
    <location>
        <begin position="249"/>
        <end position="283"/>
    </location>
</feature>
<feature type="region of interest" description="Disordered" evidence="4">
    <location>
        <begin position="416"/>
        <end position="607"/>
    </location>
</feature>
<feature type="region of interest" description="Disordered" evidence="4">
    <location>
        <begin position="777"/>
        <end position="802"/>
    </location>
</feature>
<feature type="region of interest" description="Disordered" evidence="4">
    <location>
        <begin position="877"/>
        <end position="924"/>
    </location>
</feature>
<feature type="region of interest" description="Disordered" evidence="4">
    <location>
        <begin position="936"/>
        <end position="965"/>
    </location>
</feature>
<feature type="region of interest" description="Disordered" evidence="4">
    <location>
        <begin position="1017"/>
        <end position="1055"/>
    </location>
</feature>
<feature type="compositionally biased region" description="Basic residues" evidence="4">
    <location>
        <begin position="253"/>
        <end position="262"/>
    </location>
</feature>
<feature type="compositionally biased region" description="Basic and acidic residues" evidence="4">
    <location>
        <begin position="450"/>
        <end position="462"/>
    </location>
</feature>
<feature type="compositionally biased region" description="Low complexity" evidence="4">
    <location>
        <begin position="547"/>
        <end position="557"/>
    </location>
</feature>
<feature type="compositionally biased region" description="Polar residues" evidence="4">
    <location>
        <begin position="593"/>
        <end position="605"/>
    </location>
</feature>
<feature type="compositionally biased region" description="Basic residues" evidence="4">
    <location>
        <begin position="782"/>
        <end position="796"/>
    </location>
</feature>
<feature type="compositionally biased region" description="Basic and acidic residues" evidence="4">
    <location>
        <begin position="1021"/>
        <end position="1040"/>
    </location>
</feature>
<feature type="modified residue" description="Phosphoserine" evidence="2">
    <location>
        <position position="267"/>
    </location>
</feature>
<feature type="modified residue" description="N6,N6-dimethyllysine" evidence="2">
    <location>
        <position position="340"/>
    </location>
</feature>
<feature type="modified residue" description="Phosphoserine" evidence="2">
    <location>
        <position position="1017"/>
    </location>
</feature>
<feature type="modified residue" description="Phosphoserine" evidence="2">
    <location>
        <position position="1118"/>
    </location>
</feature>
<feature type="cross-link" description="Glycyl lysine isopeptide (Lys-Gly) (interchain with G-Cter in SUMO2)" evidence="2">
    <location>
        <position position="130"/>
    </location>
</feature>
<feature type="cross-link" description="Glycyl lysine isopeptide (Lys-Gly) (interchain with G-Cter in SUMO2)" evidence="2">
    <location>
        <position position="449"/>
    </location>
</feature>
<feature type="cross-link" description="Glycyl lysine isopeptide (Lys-Gly) (interchain with G-Cter in SUMO2)" evidence="2">
    <location>
        <position position="497"/>
    </location>
</feature>
<feature type="cross-link" description="Glycyl lysine isopeptide (Lys-Gly) (interchain with G-Cter in SUMO2)" evidence="2">
    <location>
        <position position="499"/>
    </location>
</feature>
<feature type="cross-link" description="Glycyl lysine isopeptide (Lys-Gly) (interchain with G-Cter in SUMO2)" evidence="2">
    <location>
        <position position="763"/>
    </location>
</feature>
<feature type="cross-link" description="Glycyl lysine isopeptide (Lys-Gly) (interchain with G-Cter in SUMO2)" evidence="2">
    <location>
        <position position="769"/>
    </location>
</feature>
<feature type="cross-link" description="Glycyl lysine isopeptide (Lys-Gly) (interchain with G-Cter in SUMO2)" evidence="2">
    <location>
        <position position="878"/>
    </location>
</feature>
<feature type="cross-link" description="Glycyl lysine isopeptide (Lys-Gly) (interchain with G-Cter in SUMO2)" evidence="2">
    <location>
        <position position="901"/>
    </location>
</feature>
<feature type="cross-link" description="Glycyl lysine isopeptide (Lys-Gly) (interchain with G-Cter in SUMO2)" evidence="2">
    <location>
        <position position="905"/>
    </location>
</feature>
<feature type="cross-link" description="Glycyl lysine isopeptide (Lys-Gly) (interchain with G-Cter in SUMO2)" evidence="2">
    <location>
        <position position="920"/>
    </location>
</feature>
<feature type="cross-link" description="Glycyl lysine isopeptide (Lys-Gly) (interchain with G-Cter in SUMO2)" evidence="2">
    <location>
        <position position="973"/>
    </location>
</feature>
<feature type="cross-link" description="Glycyl lysine isopeptide (Lys-Gly) (interchain with G-Cter in SUMO2)" evidence="2">
    <location>
        <position position="985"/>
    </location>
</feature>
<feature type="cross-link" description="Glycyl lysine isopeptide (Lys-Gly) (interchain with G-Cter in SUMO2)" evidence="2">
    <location>
        <position position="998"/>
    </location>
</feature>
<feature type="cross-link" description="Glycyl lysine isopeptide (Lys-Gly) (interchain with G-Cter in SUMO2)" evidence="2">
    <location>
        <position position="1040"/>
    </location>
</feature>
<feature type="cross-link" description="Glycyl lysine isopeptide (Lys-Gly) (interchain with G-Cter in SUMO2)" evidence="2">
    <location>
        <position position="1055"/>
    </location>
</feature>
<proteinExistence type="inferred from homology"/>
<reference key="1">
    <citation type="journal article" date="2009" name="Science">
        <title>The genome sequence of taurine cattle: a window to ruminant biology and evolution.</title>
        <authorList>
            <consortium name="The bovine genome sequencing and analysis consortium"/>
        </authorList>
    </citation>
    <scope>NUCLEOTIDE SEQUENCE [LARGE SCALE GENOMIC DNA]</scope>
</reference>
<gene>
    <name type="primary">ARID5B</name>
</gene>
<evidence type="ECO:0000250" key="1"/>
<evidence type="ECO:0000250" key="2">
    <source>
        <dbReference type="UniProtKB" id="Q14865"/>
    </source>
</evidence>
<evidence type="ECO:0000255" key="3">
    <source>
        <dbReference type="PROSITE-ProRule" id="PRU00355"/>
    </source>
</evidence>
<evidence type="ECO:0000256" key="4">
    <source>
        <dbReference type="SAM" id="MobiDB-lite"/>
    </source>
</evidence>
<evidence type="ECO:0000305" key="5"/>
<organism>
    <name type="scientific">Bos taurus</name>
    <name type="common">Bovine</name>
    <dbReference type="NCBI Taxonomy" id="9913"/>
    <lineage>
        <taxon>Eukaryota</taxon>
        <taxon>Metazoa</taxon>
        <taxon>Chordata</taxon>
        <taxon>Craniata</taxon>
        <taxon>Vertebrata</taxon>
        <taxon>Euteleostomi</taxon>
        <taxon>Mammalia</taxon>
        <taxon>Eutheria</taxon>
        <taxon>Laurasiatheria</taxon>
        <taxon>Artiodactyla</taxon>
        <taxon>Ruminantia</taxon>
        <taxon>Pecora</taxon>
        <taxon>Bovidae</taxon>
        <taxon>Bovinae</taxon>
        <taxon>Bos</taxon>
    </lineage>
</organism>
<keyword id="KW-0010">Activator</keyword>
<keyword id="KW-0238">DNA-binding</keyword>
<keyword id="KW-1017">Isopeptide bond</keyword>
<keyword id="KW-0488">Methylation</keyword>
<keyword id="KW-0539">Nucleus</keyword>
<keyword id="KW-0597">Phosphoprotein</keyword>
<keyword id="KW-1185">Reference proteome</keyword>
<keyword id="KW-0804">Transcription</keyword>
<keyword id="KW-0805">Transcription regulation</keyword>
<keyword id="KW-0832">Ubl conjugation</keyword>
<dbReference type="EMBL" id="AAFC03084653">
    <property type="status" value="NOT_ANNOTATED_CDS"/>
    <property type="molecule type" value="Genomic_DNA"/>
</dbReference>
<dbReference type="EMBL" id="AAFC03084656">
    <property type="status" value="NOT_ANNOTATED_CDS"/>
    <property type="molecule type" value="Genomic_DNA"/>
</dbReference>
<dbReference type="EMBL" id="AAFC03084657">
    <property type="status" value="NOT_ANNOTATED_CDS"/>
    <property type="molecule type" value="Genomic_DNA"/>
</dbReference>
<dbReference type="EMBL" id="AAFC03093203">
    <property type="status" value="NOT_ANNOTATED_CDS"/>
    <property type="molecule type" value="Genomic_DNA"/>
</dbReference>
<dbReference type="EMBL" id="AAFC03093204">
    <property type="status" value="NOT_ANNOTATED_CDS"/>
    <property type="molecule type" value="Genomic_DNA"/>
</dbReference>
<dbReference type="EMBL" id="AAFC03093205">
    <property type="status" value="NOT_ANNOTATED_CDS"/>
    <property type="molecule type" value="Genomic_DNA"/>
</dbReference>
<dbReference type="EMBL" id="AAFC03093206">
    <property type="status" value="NOT_ANNOTATED_CDS"/>
    <property type="molecule type" value="Genomic_DNA"/>
</dbReference>
<dbReference type="EMBL" id="AAFC03093207">
    <property type="status" value="NOT_ANNOTATED_CDS"/>
    <property type="molecule type" value="Genomic_DNA"/>
</dbReference>
<dbReference type="EMBL" id="AAFC03122947">
    <property type="status" value="NOT_ANNOTATED_CDS"/>
    <property type="molecule type" value="Genomic_DNA"/>
</dbReference>
<dbReference type="BMRB" id="E1BLP6"/>
<dbReference type="SMR" id="E1BLP6"/>
<dbReference type="FunCoup" id="E1BLP6">
    <property type="interactions" value="488"/>
</dbReference>
<dbReference type="STRING" id="9913.ENSBTAP00000064152"/>
<dbReference type="iPTMnet" id="E1BLP6"/>
<dbReference type="PaxDb" id="9913-ENSBTAP00000008847"/>
<dbReference type="eggNOG" id="KOG2744">
    <property type="taxonomic scope" value="Eukaryota"/>
</dbReference>
<dbReference type="InParanoid" id="E1BLP6"/>
<dbReference type="Proteomes" id="UP000009136">
    <property type="component" value="Unplaced"/>
</dbReference>
<dbReference type="GO" id="GO:0005634">
    <property type="term" value="C:nucleus"/>
    <property type="evidence" value="ECO:0000318"/>
    <property type="project" value="GO_Central"/>
</dbReference>
<dbReference type="GO" id="GO:0000976">
    <property type="term" value="F:transcription cis-regulatory region binding"/>
    <property type="evidence" value="ECO:0000250"/>
    <property type="project" value="UniProtKB"/>
</dbReference>
<dbReference type="GO" id="GO:0003713">
    <property type="term" value="F:transcription coactivator activity"/>
    <property type="evidence" value="ECO:0000250"/>
    <property type="project" value="UniProtKB"/>
</dbReference>
<dbReference type="GO" id="GO:0060612">
    <property type="term" value="P:adipose tissue development"/>
    <property type="evidence" value="ECO:0000250"/>
    <property type="project" value="UniProtKB"/>
</dbReference>
<dbReference type="GO" id="GO:0051091">
    <property type="term" value="P:positive regulation of DNA-binding transcription factor activity"/>
    <property type="evidence" value="ECO:0000250"/>
    <property type="project" value="UniProtKB"/>
</dbReference>
<dbReference type="GO" id="GO:0006357">
    <property type="term" value="P:regulation of transcription by RNA polymerase II"/>
    <property type="evidence" value="ECO:0000318"/>
    <property type="project" value="GO_Central"/>
</dbReference>
<dbReference type="CDD" id="cd16885">
    <property type="entry name" value="ARID_ARID5B"/>
    <property type="match status" value="1"/>
</dbReference>
<dbReference type="FunFam" id="1.10.150.60:FF:000004">
    <property type="entry name" value="AT-rich interactive domain-containing protein 5B"/>
    <property type="match status" value="1"/>
</dbReference>
<dbReference type="Gene3D" id="1.10.150.60">
    <property type="entry name" value="ARID DNA-binding domain"/>
    <property type="match status" value="1"/>
</dbReference>
<dbReference type="InterPro" id="IPR051232">
    <property type="entry name" value="ARID/SWI1_ChromRemod"/>
</dbReference>
<dbReference type="InterPro" id="IPR030408">
    <property type="entry name" value="ARID5B_ARID/BRIGHT_DNA-bd"/>
</dbReference>
<dbReference type="InterPro" id="IPR001606">
    <property type="entry name" value="ARID_dom"/>
</dbReference>
<dbReference type="InterPro" id="IPR036431">
    <property type="entry name" value="ARID_dom_sf"/>
</dbReference>
<dbReference type="PANTHER" id="PTHR13964:SF37">
    <property type="entry name" value="AT-RICH INTERACTIVE DOMAIN-CONTAINING PROTEIN 5B"/>
    <property type="match status" value="1"/>
</dbReference>
<dbReference type="PANTHER" id="PTHR13964">
    <property type="entry name" value="RBP-RELATED"/>
    <property type="match status" value="1"/>
</dbReference>
<dbReference type="Pfam" id="PF01388">
    <property type="entry name" value="ARID"/>
    <property type="match status" value="1"/>
</dbReference>
<dbReference type="SMART" id="SM01014">
    <property type="entry name" value="ARID"/>
    <property type="match status" value="1"/>
</dbReference>
<dbReference type="SMART" id="SM00501">
    <property type="entry name" value="BRIGHT"/>
    <property type="match status" value="1"/>
</dbReference>
<dbReference type="SUPFAM" id="SSF46774">
    <property type="entry name" value="ARID-like"/>
    <property type="match status" value="1"/>
</dbReference>
<dbReference type="PROSITE" id="PS51011">
    <property type="entry name" value="ARID"/>
    <property type="match status" value="1"/>
</dbReference>
<accession>E1BLP6</accession>
<protein>
    <recommendedName>
        <fullName>AT-rich interactive domain-containing protein 5B</fullName>
        <shortName>ARID domain-containing protein 5B</shortName>
    </recommendedName>
</protein>
<comment type="function">
    <text evidence="1">Transcription coactivator that binds to the 5'-AATA[CT]-3' core sequence and plays a key role in adipogenesis and liver development. Acts by forming a complex with phosphorylated PHF2, which mediates demethylation at Lys-340, leading to target the PHF2-ARID5B complex to target promoters, where PHF2 mediates demethylation of dimethylated 'Lys-9' of histone H3 (H3K9me2), followed by transcription activation of target genes. The PHF2-ARID5B complex acts as a coactivator of HNF4A in liver. Required for adipogenesis: regulates triglyceride metabolism in adipocytes by regulating expression of adipogenic genes. Overexpression leads to induction of smooth muscle marker genes, suggesting that it may also act as a regulator of smooth muscle cell differentiation and proliferation (By similarity).</text>
</comment>
<comment type="subcellular location">
    <subcellularLocation>
        <location evidence="3">Nucleus</location>
    </subcellularLocation>
</comment>
<comment type="domain">
    <text evidence="1">The ARID domain mediates the interaction with DNA.</text>
</comment>
<comment type="PTM">
    <text evidence="1">Methylation at Lys-340 prevents DNA-binding. Demethylation by PHF2 promotes recruitment of the PHF2-ARID5B complex to promoters (By similarity).</text>
</comment>
<comment type="similarity">
    <text evidence="5">Belongs to the ARID5B family.</text>
</comment>
<sequence length="1173" mass="130464">MEPNSLQWVGSPCGLHGPYIFYKAFQFHLEGKPRILSLGDFFFVRCTPKDPICIAELQLLWEERTSRQLLSSSKLYFLPEDTPQGRNSDHGEDEVIAVSEKVIVKLEDLVKWVHSDFSKWRCGLQAGSVKTESLGRNGQKEALLKYRQSTLNSGLNFKDVLKEKADLDCLGEDEEETNVIVLSYPQYCRYRSMLKRIQDKPSSILTDQFALALGGIAVVSKNPQILYCRDTFDHPTLIENESICDEFAPNLKGRPRKKKPCPQRRDSFSGGKDPNNNSDGKSVAKVKCEARSALNKPKNNHNNCKKVSNEEKPKVAIGEECRADEQAFLVALYKYMKERKTPIERIPYLGFKQINLWTMFQAAQKLGGYETITARRQWKHIYDELGGNPGSTSAATCTRRHYERLILPYERFIKGEEDKPLPPIKPRKQENNSQENENKTKVSGAKRIKHEISKSKKEKENAPKPQDASEVSSEQEKEQETVNQKSITEPLPIADTKKKLEGYQDFAARPLVSQADPEKDSETDQGANSEKVAEEAGEKGPAPPLASAPLAPTPGTGKQSLTSPSALVDSKEPKPCCFTESPENELQEASFPGFSTTQPPLANQSEVEDDKLPAMADYIANCTVKVDQLGSDDIHNALKQTPKVLVVQSFDMFKDKDLTGPMNENHGLNYTPLLYSRGNPGIMSPLAKKKLLSQVSGASLSSSYPYGSPPPLISKKKVIAREDRCSSLSQAHHGQSTDHMAVNRPSVIQHVQSFRSKPSEERKISDIFKHDKLSRSEPRFSFSKHHLSPSKKSRGRRTVEKRALPHSHMPSFLADFYSSPHLHSLYRHTEHHLHNEQTSKYPCRDMYRETENSSFPSHKHQEKLHVNYLASLHLQDKKSAAVEAPTDDQPTDLSLPKNPHKPTGKALGLAHSAPGPQESKGTSQFQVINSQSRDCHPKACRVSPMTMSAPKKYPEALSRSGKPHPVRLENFRKMDSMVHPILHRKMSPQNIGAARPIKRSLEDLDLVIAGKKARAVSPLDPAKEVSGKEKASEQESEGSKAAHSGHSGGTSEGHKLPLSSPIFPGLYSGSLCSSGLNSRLPAGYSHSLQYLKNQAVLSPLMQPLAFHSLVMQRGIFTSPTNSQQLYRHLAAATPVGSSYGDLLHNSIYPLAAINPQAAFPSSQLSSVHPSTKL</sequence>